<evidence type="ECO:0000250" key="1"/>
<evidence type="ECO:0000255" key="2">
    <source>
        <dbReference type="HAMAP-Rule" id="MF_00118"/>
    </source>
</evidence>
<evidence type="ECO:0000305" key="3"/>
<keyword id="KW-0963">Cytoplasm</keyword>
<keyword id="KW-0251">Elongation factor</keyword>
<keyword id="KW-0342">GTP-binding</keyword>
<keyword id="KW-0378">Hydrolase</keyword>
<keyword id="KW-0460">Magnesium</keyword>
<keyword id="KW-0479">Metal-binding</keyword>
<keyword id="KW-0547">Nucleotide-binding</keyword>
<keyword id="KW-0648">Protein biosynthesis</keyword>
<keyword id="KW-1185">Reference proteome</keyword>
<feature type="chain" id="PRO_0000091378" description="Elongation factor Tu">
    <location>
        <begin position="1"/>
        <end position="394"/>
    </location>
</feature>
<feature type="domain" description="tr-type G">
    <location>
        <begin position="10"/>
        <end position="204"/>
    </location>
</feature>
<feature type="region of interest" description="G1" evidence="1">
    <location>
        <begin position="19"/>
        <end position="26"/>
    </location>
</feature>
<feature type="region of interest" description="G2" evidence="1">
    <location>
        <begin position="60"/>
        <end position="64"/>
    </location>
</feature>
<feature type="region of interest" description="G3" evidence="1">
    <location>
        <begin position="81"/>
        <end position="84"/>
    </location>
</feature>
<feature type="region of interest" description="G4" evidence="1">
    <location>
        <begin position="136"/>
        <end position="139"/>
    </location>
</feature>
<feature type="region of interest" description="G5" evidence="1">
    <location>
        <begin position="174"/>
        <end position="176"/>
    </location>
</feature>
<feature type="binding site" evidence="2">
    <location>
        <begin position="19"/>
        <end position="26"/>
    </location>
    <ligand>
        <name>GTP</name>
        <dbReference type="ChEBI" id="CHEBI:37565"/>
    </ligand>
</feature>
<feature type="binding site" evidence="2">
    <location>
        <position position="26"/>
    </location>
    <ligand>
        <name>Mg(2+)</name>
        <dbReference type="ChEBI" id="CHEBI:18420"/>
    </ligand>
</feature>
<feature type="binding site" evidence="2">
    <location>
        <begin position="81"/>
        <end position="85"/>
    </location>
    <ligand>
        <name>GTP</name>
        <dbReference type="ChEBI" id="CHEBI:37565"/>
    </ligand>
</feature>
<feature type="binding site" evidence="2">
    <location>
        <begin position="136"/>
        <end position="139"/>
    </location>
    <ligand>
        <name>GTP</name>
        <dbReference type="ChEBI" id="CHEBI:37565"/>
    </ligand>
</feature>
<feature type="sequence conflict" description="In Ref. 1; CAA90881." evidence="3" ref="1">
    <original>S</original>
    <variation>T</variation>
    <location>
        <position position="198"/>
    </location>
</feature>
<feature type="sequence conflict" description="In Ref. 1; CAA90881." evidence="3" ref="1">
    <original>RAT</original>
    <variation>ELQ</variation>
    <location>
        <begin position="205"/>
        <end position="207"/>
    </location>
</feature>
<gene>
    <name evidence="2" type="primary">tuf</name>
    <name type="ordered locus">RP661</name>
</gene>
<dbReference type="EC" id="3.6.5.3" evidence="2"/>
<dbReference type="EMBL" id="Z54170">
    <property type="protein sequence ID" value="CAA90881.1"/>
    <property type="molecule type" value="Genomic_DNA"/>
</dbReference>
<dbReference type="EMBL" id="AJ235272">
    <property type="protein sequence ID" value="CAA15101.1"/>
    <property type="molecule type" value="Genomic_DNA"/>
</dbReference>
<dbReference type="PIR" id="C71672">
    <property type="entry name" value="C71672"/>
</dbReference>
<dbReference type="RefSeq" id="NP_221025.1">
    <property type="nucleotide sequence ID" value="NC_000963.1"/>
</dbReference>
<dbReference type="RefSeq" id="WP_004596195.1">
    <property type="nucleotide sequence ID" value="NC_000963.1"/>
</dbReference>
<dbReference type="SMR" id="P48865"/>
<dbReference type="STRING" id="272947.gene:17555738"/>
<dbReference type="EnsemblBacteria" id="CAA15101">
    <property type="protein sequence ID" value="CAA15101"/>
    <property type="gene ID" value="CAA15101"/>
</dbReference>
<dbReference type="GeneID" id="57569786"/>
<dbReference type="KEGG" id="rpr:RP661"/>
<dbReference type="PATRIC" id="fig|272947.5.peg.683"/>
<dbReference type="eggNOG" id="COG0050">
    <property type="taxonomic scope" value="Bacteria"/>
</dbReference>
<dbReference type="HOGENOM" id="CLU_007265_0_0_5"/>
<dbReference type="OrthoDB" id="9803139at2"/>
<dbReference type="Proteomes" id="UP000002480">
    <property type="component" value="Chromosome"/>
</dbReference>
<dbReference type="GO" id="GO:0005737">
    <property type="term" value="C:cytoplasm"/>
    <property type="evidence" value="ECO:0007669"/>
    <property type="project" value="UniProtKB-SubCell"/>
</dbReference>
<dbReference type="GO" id="GO:0005525">
    <property type="term" value="F:GTP binding"/>
    <property type="evidence" value="ECO:0007669"/>
    <property type="project" value="UniProtKB-UniRule"/>
</dbReference>
<dbReference type="GO" id="GO:0003924">
    <property type="term" value="F:GTPase activity"/>
    <property type="evidence" value="ECO:0007669"/>
    <property type="project" value="InterPro"/>
</dbReference>
<dbReference type="GO" id="GO:0097216">
    <property type="term" value="F:guanosine tetraphosphate binding"/>
    <property type="evidence" value="ECO:0007669"/>
    <property type="project" value="UniProtKB-ARBA"/>
</dbReference>
<dbReference type="GO" id="GO:0003746">
    <property type="term" value="F:translation elongation factor activity"/>
    <property type="evidence" value="ECO:0007669"/>
    <property type="project" value="UniProtKB-UniRule"/>
</dbReference>
<dbReference type="CDD" id="cd01884">
    <property type="entry name" value="EF_Tu"/>
    <property type="match status" value="1"/>
</dbReference>
<dbReference type="CDD" id="cd03697">
    <property type="entry name" value="EFTU_II"/>
    <property type="match status" value="1"/>
</dbReference>
<dbReference type="CDD" id="cd03707">
    <property type="entry name" value="EFTU_III"/>
    <property type="match status" value="1"/>
</dbReference>
<dbReference type="FunFam" id="2.40.30.10:FF:000001">
    <property type="entry name" value="Elongation factor Tu"/>
    <property type="match status" value="1"/>
</dbReference>
<dbReference type="FunFam" id="3.40.50.300:FF:000003">
    <property type="entry name" value="Elongation factor Tu"/>
    <property type="match status" value="1"/>
</dbReference>
<dbReference type="Gene3D" id="3.40.50.300">
    <property type="entry name" value="P-loop containing nucleotide triphosphate hydrolases"/>
    <property type="match status" value="1"/>
</dbReference>
<dbReference type="Gene3D" id="2.40.30.10">
    <property type="entry name" value="Translation factors"/>
    <property type="match status" value="2"/>
</dbReference>
<dbReference type="HAMAP" id="MF_00118_B">
    <property type="entry name" value="EF_Tu_B"/>
    <property type="match status" value="1"/>
</dbReference>
<dbReference type="InterPro" id="IPR041709">
    <property type="entry name" value="EF-Tu_GTP-bd"/>
</dbReference>
<dbReference type="InterPro" id="IPR050055">
    <property type="entry name" value="EF-Tu_GTPase"/>
</dbReference>
<dbReference type="InterPro" id="IPR004161">
    <property type="entry name" value="EFTu-like_2"/>
</dbReference>
<dbReference type="InterPro" id="IPR033720">
    <property type="entry name" value="EFTU_2"/>
</dbReference>
<dbReference type="InterPro" id="IPR031157">
    <property type="entry name" value="G_TR_CS"/>
</dbReference>
<dbReference type="InterPro" id="IPR027417">
    <property type="entry name" value="P-loop_NTPase"/>
</dbReference>
<dbReference type="InterPro" id="IPR005225">
    <property type="entry name" value="Small_GTP-bd"/>
</dbReference>
<dbReference type="InterPro" id="IPR000795">
    <property type="entry name" value="T_Tr_GTP-bd_dom"/>
</dbReference>
<dbReference type="InterPro" id="IPR009000">
    <property type="entry name" value="Transl_B-barrel_sf"/>
</dbReference>
<dbReference type="InterPro" id="IPR009001">
    <property type="entry name" value="Transl_elong_EF1A/Init_IF2_C"/>
</dbReference>
<dbReference type="InterPro" id="IPR004541">
    <property type="entry name" value="Transl_elong_EFTu/EF1A_bac/org"/>
</dbReference>
<dbReference type="InterPro" id="IPR004160">
    <property type="entry name" value="Transl_elong_EFTu/EF1A_C"/>
</dbReference>
<dbReference type="NCBIfam" id="TIGR00485">
    <property type="entry name" value="EF-Tu"/>
    <property type="match status" value="1"/>
</dbReference>
<dbReference type="NCBIfam" id="NF000766">
    <property type="entry name" value="PRK00049.1"/>
    <property type="match status" value="1"/>
</dbReference>
<dbReference type="NCBIfam" id="NF009372">
    <property type="entry name" value="PRK12735.1"/>
    <property type="match status" value="1"/>
</dbReference>
<dbReference type="NCBIfam" id="NF009373">
    <property type="entry name" value="PRK12736.1"/>
    <property type="match status" value="1"/>
</dbReference>
<dbReference type="NCBIfam" id="TIGR00231">
    <property type="entry name" value="small_GTP"/>
    <property type="match status" value="1"/>
</dbReference>
<dbReference type="PANTHER" id="PTHR43721:SF22">
    <property type="entry name" value="ELONGATION FACTOR TU, MITOCHONDRIAL"/>
    <property type="match status" value="1"/>
</dbReference>
<dbReference type="PANTHER" id="PTHR43721">
    <property type="entry name" value="ELONGATION FACTOR TU-RELATED"/>
    <property type="match status" value="1"/>
</dbReference>
<dbReference type="Pfam" id="PF00009">
    <property type="entry name" value="GTP_EFTU"/>
    <property type="match status" value="1"/>
</dbReference>
<dbReference type="Pfam" id="PF03144">
    <property type="entry name" value="GTP_EFTU_D2"/>
    <property type="match status" value="1"/>
</dbReference>
<dbReference type="Pfam" id="PF03143">
    <property type="entry name" value="GTP_EFTU_D3"/>
    <property type="match status" value="1"/>
</dbReference>
<dbReference type="PRINTS" id="PR00315">
    <property type="entry name" value="ELONGATNFCT"/>
</dbReference>
<dbReference type="SUPFAM" id="SSF50465">
    <property type="entry name" value="EF-Tu/eEF-1alpha/eIF2-gamma C-terminal domain"/>
    <property type="match status" value="1"/>
</dbReference>
<dbReference type="SUPFAM" id="SSF52540">
    <property type="entry name" value="P-loop containing nucleoside triphosphate hydrolases"/>
    <property type="match status" value="1"/>
</dbReference>
<dbReference type="SUPFAM" id="SSF50447">
    <property type="entry name" value="Translation proteins"/>
    <property type="match status" value="1"/>
</dbReference>
<dbReference type="PROSITE" id="PS00301">
    <property type="entry name" value="G_TR_1"/>
    <property type="match status" value="1"/>
</dbReference>
<dbReference type="PROSITE" id="PS51722">
    <property type="entry name" value="G_TR_2"/>
    <property type="match status" value="1"/>
</dbReference>
<protein>
    <recommendedName>
        <fullName evidence="2">Elongation factor Tu</fullName>
        <shortName evidence="2">EF-Tu</shortName>
        <ecNumber evidence="2">3.6.5.3</ecNumber>
    </recommendedName>
</protein>
<name>EFTU_RICPR</name>
<accession>P48865</accession>
<sequence>MAKAKFERTKPHVNIGTIGHVDHGKTSLTAAITIILAKTGGAKATAYDQIDAAPEEKERGITISTAHVEYETQNRHYAHVDCPGHADYVKNMITGAAQMDGAILVVSAADGPMPQTREHILLAKQVGVPAMVVFLNKVDMVDDPDLLELVEMEVRELLSKYGFPGNEIPIIKGSALQALEGKPEGEKAINELMNAVDSYIPQPIRATDKPFLMPIEDVFSISGRGTVVTGRVESGIIKVGEEIEIVGLKNTQKTTCTGVEMFRKLLDEGQSGDNVGILLRGTKREEVERGQVLAKPGSIKPHDKFEAEVYVLSKEEGGRHTPFTNDYRPQFYFRTTDVTGTIKLPSDKQMVMPGDNATFSVELIKPIAMQEGLKFSIREGGRTVGAGIVTKINN</sequence>
<proteinExistence type="inferred from homology"/>
<reference key="1">
    <citation type="journal article" date="1996" name="J. Bacteriol.">
        <title>A chimeric disposition of the elongation factor genes in Rickettsia prowazekii.</title>
        <authorList>
            <person name="Syvaenen A.-C."/>
            <person name="Amiri H."/>
            <person name="Jamal A."/>
            <person name="Andersson S.G.E."/>
            <person name="Kurland C.G."/>
        </authorList>
    </citation>
    <scope>NUCLEOTIDE SEQUENCE [GENOMIC DNA]</scope>
    <source>
        <strain>Madrid E</strain>
    </source>
</reference>
<reference key="2">
    <citation type="journal article" date="1998" name="Nature">
        <title>The genome sequence of Rickettsia prowazekii and the origin of mitochondria.</title>
        <authorList>
            <person name="Andersson S.G.E."/>
            <person name="Zomorodipour A."/>
            <person name="Andersson J.O."/>
            <person name="Sicheritz-Ponten T."/>
            <person name="Alsmark U.C.M."/>
            <person name="Podowski R.M."/>
            <person name="Naeslund A.K."/>
            <person name="Eriksson A.-S."/>
            <person name="Winkler H.H."/>
            <person name="Kurland C.G."/>
        </authorList>
    </citation>
    <scope>NUCLEOTIDE SEQUENCE [LARGE SCALE GENOMIC DNA]</scope>
    <source>
        <strain>Madrid E</strain>
    </source>
</reference>
<comment type="function">
    <text evidence="2">GTP hydrolase that promotes the GTP-dependent binding of aminoacyl-tRNA to the A-site of ribosomes during protein biosynthesis.</text>
</comment>
<comment type="catalytic activity">
    <reaction evidence="2">
        <text>GTP + H2O = GDP + phosphate + H(+)</text>
        <dbReference type="Rhea" id="RHEA:19669"/>
        <dbReference type="ChEBI" id="CHEBI:15377"/>
        <dbReference type="ChEBI" id="CHEBI:15378"/>
        <dbReference type="ChEBI" id="CHEBI:37565"/>
        <dbReference type="ChEBI" id="CHEBI:43474"/>
        <dbReference type="ChEBI" id="CHEBI:58189"/>
        <dbReference type="EC" id="3.6.5.3"/>
    </reaction>
    <physiologicalReaction direction="left-to-right" evidence="2">
        <dbReference type="Rhea" id="RHEA:19670"/>
    </physiologicalReaction>
</comment>
<comment type="subunit">
    <text evidence="2">Monomer.</text>
</comment>
<comment type="subcellular location">
    <subcellularLocation>
        <location evidence="2">Cytoplasm</location>
    </subcellularLocation>
</comment>
<comment type="similarity">
    <text evidence="2">Belongs to the TRAFAC class translation factor GTPase superfamily. Classic translation factor GTPase family. EF-Tu/EF-1A subfamily.</text>
</comment>
<organism>
    <name type="scientific">Rickettsia prowazekii (strain Madrid E)</name>
    <dbReference type="NCBI Taxonomy" id="272947"/>
    <lineage>
        <taxon>Bacteria</taxon>
        <taxon>Pseudomonadati</taxon>
        <taxon>Pseudomonadota</taxon>
        <taxon>Alphaproteobacteria</taxon>
        <taxon>Rickettsiales</taxon>
        <taxon>Rickettsiaceae</taxon>
        <taxon>Rickettsieae</taxon>
        <taxon>Rickettsia</taxon>
        <taxon>typhus group</taxon>
    </lineage>
</organism>